<name>ENGB_STRPM</name>
<sequence>MAEEQVLNTHNASILLSAANKSHYPKDDLPEIALAGRSNVGKSSFINTILGRKNLARTSSKPGKTQLLNFFNIDDKLRFVDVPGYGYAKVSKSERAKWGKMIEEYLTSRDNLRAVVSLVDLRHAPSKEDIQMYDFLKYYDIPVIVVATKADKIPRGKWNKHESVVKKALNFDNSDTFIVFSSVERIGIDDSWDAILEQV</sequence>
<comment type="function">
    <text evidence="1">Necessary for normal cell division and for the maintenance of normal septation.</text>
</comment>
<comment type="cofactor">
    <cofactor evidence="1">
        <name>Mg(2+)</name>
        <dbReference type="ChEBI" id="CHEBI:18420"/>
    </cofactor>
</comment>
<comment type="similarity">
    <text evidence="1">Belongs to the TRAFAC class TrmE-Era-EngA-EngB-Septin-like GTPase superfamily. EngB GTPase family.</text>
</comment>
<organism>
    <name type="scientific">Streptococcus pyogenes serotype M28 (strain MGAS6180)</name>
    <dbReference type="NCBI Taxonomy" id="319701"/>
    <lineage>
        <taxon>Bacteria</taxon>
        <taxon>Bacillati</taxon>
        <taxon>Bacillota</taxon>
        <taxon>Bacilli</taxon>
        <taxon>Lactobacillales</taxon>
        <taxon>Streptococcaceae</taxon>
        <taxon>Streptococcus</taxon>
    </lineage>
</organism>
<reference key="1">
    <citation type="journal article" date="2005" name="J. Infect. Dis.">
        <title>Genome sequence of a serotype M28 strain of group A Streptococcus: potential new insights into puerperal sepsis and bacterial disease specificity.</title>
        <authorList>
            <person name="Green N.M."/>
            <person name="Zhang S."/>
            <person name="Porcella S.F."/>
            <person name="Nagiec M.J."/>
            <person name="Barbian K.D."/>
            <person name="Beres S.B."/>
            <person name="Lefebvre R.B."/>
            <person name="Musser J.M."/>
        </authorList>
    </citation>
    <scope>NUCLEOTIDE SEQUENCE [LARGE SCALE GENOMIC DNA]</scope>
    <source>
        <strain>MGAS6180</strain>
    </source>
</reference>
<gene>
    <name evidence="1" type="primary">engB</name>
    <name type="ordered locus">M28_Spy0672</name>
</gene>
<proteinExistence type="inferred from homology"/>
<dbReference type="EMBL" id="CP000056">
    <property type="protein sequence ID" value="AAX71785.1"/>
    <property type="molecule type" value="Genomic_DNA"/>
</dbReference>
<dbReference type="RefSeq" id="WP_011284702.1">
    <property type="nucleotide sequence ID" value="NC_007296.2"/>
</dbReference>
<dbReference type="SMR" id="Q48U21"/>
<dbReference type="KEGG" id="spb:M28_Spy0672"/>
<dbReference type="HOGENOM" id="CLU_033732_3_0_9"/>
<dbReference type="GO" id="GO:0005829">
    <property type="term" value="C:cytosol"/>
    <property type="evidence" value="ECO:0007669"/>
    <property type="project" value="TreeGrafter"/>
</dbReference>
<dbReference type="GO" id="GO:0005525">
    <property type="term" value="F:GTP binding"/>
    <property type="evidence" value="ECO:0007669"/>
    <property type="project" value="UniProtKB-UniRule"/>
</dbReference>
<dbReference type="GO" id="GO:0046872">
    <property type="term" value="F:metal ion binding"/>
    <property type="evidence" value="ECO:0007669"/>
    <property type="project" value="UniProtKB-KW"/>
</dbReference>
<dbReference type="GO" id="GO:0000917">
    <property type="term" value="P:division septum assembly"/>
    <property type="evidence" value="ECO:0007669"/>
    <property type="project" value="UniProtKB-KW"/>
</dbReference>
<dbReference type="CDD" id="cd01876">
    <property type="entry name" value="YihA_EngB"/>
    <property type="match status" value="1"/>
</dbReference>
<dbReference type="FunFam" id="3.40.50.300:FF:000098">
    <property type="entry name" value="Probable GTP-binding protein EngB"/>
    <property type="match status" value="1"/>
</dbReference>
<dbReference type="Gene3D" id="3.40.50.300">
    <property type="entry name" value="P-loop containing nucleotide triphosphate hydrolases"/>
    <property type="match status" value="1"/>
</dbReference>
<dbReference type="HAMAP" id="MF_00321">
    <property type="entry name" value="GTPase_EngB"/>
    <property type="match status" value="1"/>
</dbReference>
<dbReference type="InterPro" id="IPR030393">
    <property type="entry name" value="G_ENGB_dom"/>
</dbReference>
<dbReference type="InterPro" id="IPR006073">
    <property type="entry name" value="GTP-bd"/>
</dbReference>
<dbReference type="InterPro" id="IPR019987">
    <property type="entry name" value="GTP-bd_ribosome_bio_YsxC"/>
</dbReference>
<dbReference type="InterPro" id="IPR027417">
    <property type="entry name" value="P-loop_NTPase"/>
</dbReference>
<dbReference type="InterPro" id="IPR005225">
    <property type="entry name" value="Small_GTP-bd"/>
</dbReference>
<dbReference type="NCBIfam" id="TIGR03598">
    <property type="entry name" value="GTPase_YsxC"/>
    <property type="match status" value="1"/>
</dbReference>
<dbReference type="NCBIfam" id="TIGR00231">
    <property type="entry name" value="small_GTP"/>
    <property type="match status" value="1"/>
</dbReference>
<dbReference type="PANTHER" id="PTHR11649:SF13">
    <property type="entry name" value="ENGB-TYPE G DOMAIN-CONTAINING PROTEIN"/>
    <property type="match status" value="1"/>
</dbReference>
<dbReference type="PANTHER" id="PTHR11649">
    <property type="entry name" value="MSS1/TRME-RELATED GTP-BINDING PROTEIN"/>
    <property type="match status" value="1"/>
</dbReference>
<dbReference type="Pfam" id="PF01926">
    <property type="entry name" value="MMR_HSR1"/>
    <property type="match status" value="1"/>
</dbReference>
<dbReference type="SUPFAM" id="SSF52540">
    <property type="entry name" value="P-loop containing nucleoside triphosphate hydrolases"/>
    <property type="match status" value="1"/>
</dbReference>
<dbReference type="PROSITE" id="PS51706">
    <property type="entry name" value="G_ENGB"/>
    <property type="match status" value="1"/>
</dbReference>
<feature type="chain" id="PRO_0000266967" description="Probable GTP-binding protein EngB">
    <location>
        <begin position="1"/>
        <end position="199"/>
    </location>
</feature>
<feature type="domain" description="EngB-type G" evidence="1">
    <location>
        <begin position="28"/>
        <end position="199"/>
    </location>
</feature>
<feature type="binding site" evidence="1">
    <location>
        <begin position="36"/>
        <end position="43"/>
    </location>
    <ligand>
        <name>GTP</name>
        <dbReference type="ChEBI" id="CHEBI:37565"/>
    </ligand>
</feature>
<feature type="binding site" evidence="1">
    <location>
        <position position="43"/>
    </location>
    <ligand>
        <name>Mg(2+)</name>
        <dbReference type="ChEBI" id="CHEBI:18420"/>
    </ligand>
</feature>
<feature type="binding site" evidence="1">
    <location>
        <begin position="63"/>
        <end position="67"/>
    </location>
    <ligand>
        <name>GTP</name>
        <dbReference type="ChEBI" id="CHEBI:37565"/>
    </ligand>
</feature>
<feature type="binding site" evidence="1">
    <location>
        <position position="65"/>
    </location>
    <ligand>
        <name>Mg(2+)</name>
        <dbReference type="ChEBI" id="CHEBI:18420"/>
    </ligand>
</feature>
<feature type="binding site" evidence="1">
    <location>
        <begin position="81"/>
        <end position="84"/>
    </location>
    <ligand>
        <name>GTP</name>
        <dbReference type="ChEBI" id="CHEBI:37565"/>
    </ligand>
</feature>
<feature type="binding site" evidence="1">
    <location>
        <begin position="148"/>
        <end position="151"/>
    </location>
    <ligand>
        <name>GTP</name>
        <dbReference type="ChEBI" id="CHEBI:37565"/>
    </ligand>
</feature>
<feature type="binding site" evidence="1">
    <location>
        <begin position="180"/>
        <end position="182"/>
    </location>
    <ligand>
        <name>GTP</name>
        <dbReference type="ChEBI" id="CHEBI:37565"/>
    </ligand>
</feature>
<keyword id="KW-0131">Cell cycle</keyword>
<keyword id="KW-0132">Cell division</keyword>
<keyword id="KW-0342">GTP-binding</keyword>
<keyword id="KW-0460">Magnesium</keyword>
<keyword id="KW-0479">Metal-binding</keyword>
<keyword id="KW-0547">Nucleotide-binding</keyword>
<keyword id="KW-0717">Septation</keyword>
<protein>
    <recommendedName>
        <fullName evidence="1">Probable GTP-binding protein EngB</fullName>
    </recommendedName>
</protein>
<evidence type="ECO:0000255" key="1">
    <source>
        <dbReference type="HAMAP-Rule" id="MF_00321"/>
    </source>
</evidence>
<accession>Q48U21</accession>